<organism>
    <name type="scientific">Staphylococcus aureus (strain MW2)</name>
    <dbReference type="NCBI Taxonomy" id="196620"/>
    <lineage>
        <taxon>Bacteria</taxon>
        <taxon>Bacillati</taxon>
        <taxon>Bacillota</taxon>
        <taxon>Bacilli</taxon>
        <taxon>Bacillales</taxon>
        <taxon>Staphylococcaceae</taxon>
        <taxon>Staphylococcus</taxon>
    </lineage>
</organism>
<accession>P63956</accession>
<accession>Q99SA1</accession>
<keyword id="KW-0520">NAD</keyword>
<keyword id="KW-0560">Oxidoreductase</keyword>
<reference key="1">
    <citation type="journal article" date="2002" name="Lancet">
        <title>Genome and virulence determinants of high virulence community-acquired MRSA.</title>
        <authorList>
            <person name="Baba T."/>
            <person name="Takeuchi F."/>
            <person name="Kuroda M."/>
            <person name="Yuzawa H."/>
            <person name="Aoki K."/>
            <person name="Oguchi A."/>
            <person name="Nagai Y."/>
            <person name="Iwama N."/>
            <person name="Asano K."/>
            <person name="Naimi T."/>
            <person name="Kuroda H."/>
            <person name="Cui L."/>
            <person name="Yamamoto K."/>
            <person name="Hiramatsu K."/>
        </authorList>
    </citation>
    <scope>NUCLEOTIDE SEQUENCE [LARGE SCALE GENOMIC DNA]</scope>
    <source>
        <strain>MW2</strain>
    </source>
</reference>
<evidence type="ECO:0000255" key="1">
    <source>
        <dbReference type="HAMAP-Rule" id="MF_00196"/>
    </source>
</evidence>
<name>MTLD_STAAW</name>
<feature type="chain" id="PRO_0000170724" description="Mannitol-1-phosphate 5-dehydrogenase">
    <location>
        <begin position="1"/>
        <end position="368"/>
    </location>
</feature>
<feature type="binding site" evidence="1">
    <location>
        <begin position="3"/>
        <end position="14"/>
    </location>
    <ligand>
        <name>NAD(+)</name>
        <dbReference type="ChEBI" id="CHEBI:57540"/>
    </ligand>
</feature>
<gene>
    <name evidence="1" type="primary">mtlD</name>
    <name type="ordered locus">MW2085</name>
</gene>
<dbReference type="EC" id="1.1.1.17" evidence="1"/>
<dbReference type="EMBL" id="BA000033">
    <property type="protein sequence ID" value="BAB95950.1"/>
    <property type="molecule type" value="Genomic_DNA"/>
</dbReference>
<dbReference type="RefSeq" id="WP_000648723.1">
    <property type="nucleotide sequence ID" value="NC_003923.1"/>
</dbReference>
<dbReference type="SMR" id="P63956"/>
<dbReference type="KEGG" id="sam:MW2085"/>
<dbReference type="HOGENOM" id="CLU_036089_2_0_9"/>
<dbReference type="GO" id="GO:0005829">
    <property type="term" value="C:cytosol"/>
    <property type="evidence" value="ECO:0007669"/>
    <property type="project" value="TreeGrafter"/>
</dbReference>
<dbReference type="GO" id="GO:0008926">
    <property type="term" value="F:mannitol-1-phosphate 5-dehydrogenase activity"/>
    <property type="evidence" value="ECO:0007669"/>
    <property type="project" value="UniProtKB-UniRule"/>
</dbReference>
<dbReference type="GO" id="GO:0019592">
    <property type="term" value="P:mannitol catabolic process"/>
    <property type="evidence" value="ECO:0007669"/>
    <property type="project" value="TreeGrafter"/>
</dbReference>
<dbReference type="FunFam" id="3.40.50.720:FF:000316">
    <property type="entry name" value="Mannitol-1-phosphate 5-dehydrogenase"/>
    <property type="match status" value="1"/>
</dbReference>
<dbReference type="Gene3D" id="1.10.1040.10">
    <property type="entry name" value="N-(1-d-carboxylethyl)-l-norvaline Dehydrogenase, domain 2"/>
    <property type="match status" value="1"/>
</dbReference>
<dbReference type="Gene3D" id="3.40.50.720">
    <property type="entry name" value="NAD(P)-binding Rossmann-like Domain"/>
    <property type="match status" value="1"/>
</dbReference>
<dbReference type="HAMAP" id="MF_00196">
    <property type="entry name" value="Mannitol_dehydrog"/>
    <property type="match status" value="1"/>
</dbReference>
<dbReference type="InterPro" id="IPR008927">
    <property type="entry name" value="6-PGluconate_DH-like_C_sf"/>
</dbReference>
<dbReference type="InterPro" id="IPR013328">
    <property type="entry name" value="6PGD_dom2"/>
</dbReference>
<dbReference type="InterPro" id="IPR023028">
    <property type="entry name" value="Mannitol_1_phos_5_DH"/>
</dbReference>
<dbReference type="InterPro" id="IPR000669">
    <property type="entry name" value="Mannitol_DH"/>
</dbReference>
<dbReference type="InterPro" id="IPR013118">
    <property type="entry name" value="Mannitol_DH_C"/>
</dbReference>
<dbReference type="InterPro" id="IPR023027">
    <property type="entry name" value="Mannitol_DH_CS"/>
</dbReference>
<dbReference type="InterPro" id="IPR013131">
    <property type="entry name" value="Mannitol_DH_N"/>
</dbReference>
<dbReference type="InterPro" id="IPR036291">
    <property type="entry name" value="NAD(P)-bd_dom_sf"/>
</dbReference>
<dbReference type="NCBIfam" id="NF002645">
    <property type="entry name" value="PRK02318.1-1"/>
    <property type="match status" value="1"/>
</dbReference>
<dbReference type="NCBIfam" id="NF002652">
    <property type="entry name" value="PRK02318.2-5"/>
    <property type="match status" value="1"/>
</dbReference>
<dbReference type="PANTHER" id="PTHR30524:SF0">
    <property type="entry name" value="ALTRONATE OXIDOREDUCTASE-RELATED"/>
    <property type="match status" value="1"/>
</dbReference>
<dbReference type="PANTHER" id="PTHR30524">
    <property type="entry name" value="MANNITOL-1-PHOSPHATE 5-DEHYDROGENASE"/>
    <property type="match status" value="1"/>
</dbReference>
<dbReference type="Pfam" id="PF01232">
    <property type="entry name" value="Mannitol_dh"/>
    <property type="match status" value="1"/>
</dbReference>
<dbReference type="Pfam" id="PF08125">
    <property type="entry name" value="Mannitol_dh_C"/>
    <property type="match status" value="1"/>
</dbReference>
<dbReference type="PRINTS" id="PR00084">
    <property type="entry name" value="MTLDHDRGNASE"/>
</dbReference>
<dbReference type="SUPFAM" id="SSF48179">
    <property type="entry name" value="6-phosphogluconate dehydrogenase C-terminal domain-like"/>
    <property type="match status" value="1"/>
</dbReference>
<dbReference type="SUPFAM" id="SSF51735">
    <property type="entry name" value="NAD(P)-binding Rossmann-fold domains"/>
    <property type="match status" value="1"/>
</dbReference>
<dbReference type="PROSITE" id="PS00974">
    <property type="entry name" value="MANNITOL_DHGENASE"/>
    <property type="match status" value="1"/>
</dbReference>
<protein>
    <recommendedName>
        <fullName evidence="1">Mannitol-1-phosphate 5-dehydrogenase</fullName>
        <ecNumber evidence="1">1.1.1.17</ecNumber>
    </recommendedName>
</protein>
<comment type="catalytic activity">
    <reaction evidence="1">
        <text>D-mannitol 1-phosphate + NAD(+) = beta-D-fructose 6-phosphate + NADH + H(+)</text>
        <dbReference type="Rhea" id="RHEA:19661"/>
        <dbReference type="ChEBI" id="CHEBI:15378"/>
        <dbReference type="ChEBI" id="CHEBI:57540"/>
        <dbReference type="ChEBI" id="CHEBI:57634"/>
        <dbReference type="ChEBI" id="CHEBI:57945"/>
        <dbReference type="ChEBI" id="CHEBI:61381"/>
        <dbReference type="EC" id="1.1.1.17"/>
    </reaction>
</comment>
<comment type="similarity">
    <text evidence="1">Belongs to the mannitol dehydrogenase family.</text>
</comment>
<proteinExistence type="inferred from homology"/>
<sequence length="368" mass="40936">MKAVHFGAGNIGRGFIGYILADNNVKVTFADVNEEIINALAHDHQYDVILADESKTTTRVNNVDAINSMQPSEALKQAILEADIITTAVGVNILPIIAKSFAPFLKEKTNHVNIVACENAIMATDTLKKAVLDITGPLGNNIHFANSAVDRIVPLQKNENILDVMVEPFYEWVVEKDAWYGPELNHIKYVDDLTPYIERKLLTVNTGHAYLAYAGKFAGKATVLDAVKDSSIEAGLRRVLAETSQYITNEFDFTEAEQAGYVEKIIDRFNNSYLSDEVTRVGRGTLRKIGPKDRIIKPLTYLYNKDLERTGLLNTAALLLKYDDTADQETVEKNNYIKEHGLKAFLSEYAKVDDGLADEIIEAYNSLS</sequence>